<feature type="chain" id="PRO_1000080086" description="Large ribosomal subunit protein bL20">
    <location>
        <begin position="1"/>
        <end position="118"/>
    </location>
</feature>
<gene>
    <name evidence="1" type="primary">rplT</name>
    <name type="ordered locus">PputGB1_3478</name>
</gene>
<dbReference type="EMBL" id="CP000926">
    <property type="protein sequence ID" value="ABY99369.1"/>
    <property type="molecule type" value="Genomic_DNA"/>
</dbReference>
<dbReference type="RefSeq" id="WP_003250671.1">
    <property type="nucleotide sequence ID" value="NC_010322.1"/>
</dbReference>
<dbReference type="SMR" id="B0KKR5"/>
<dbReference type="GeneID" id="97167549"/>
<dbReference type="KEGG" id="ppg:PputGB1_3478"/>
<dbReference type="eggNOG" id="COG0292">
    <property type="taxonomic scope" value="Bacteria"/>
</dbReference>
<dbReference type="HOGENOM" id="CLU_123265_0_1_6"/>
<dbReference type="Proteomes" id="UP000002157">
    <property type="component" value="Chromosome"/>
</dbReference>
<dbReference type="GO" id="GO:1990904">
    <property type="term" value="C:ribonucleoprotein complex"/>
    <property type="evidence" value="ECO:0007669"/>
    <property type="project" value="UniProtKB-KW"/>
</dbReference>
<dbReference type="GO" id="GO:0005840">
    <property type="term" value="C:ribosome"/>
    <property type="evidence" value="ECO:0007669"/>
    <property type="project" value="UniProtKB-KW"/>
</dbReference>
<dbReference type="GO" id="GO:0019843">
    <property type="term" value="F:rRNA binding"/>
    <property type="evidence" value="ECO:0007669"/>
    <property type="project" value="UniProtKB-UniRule"/>
</dbReference>
<dbReference type="GO" id="GO:0003735">
    <property type="term" value="F:structural constituent of ribosome"/>
    <property type="evidence" value="ECO:0007669"/>
    <property type="project" value="InterPro"/>
</dbReference>
<dbReference type="GO" id="GO:0000027">
    <property type="term" value="P:ribosomal large subunit assembly"/>
    <property type="evidence" value="ECO:0007669"/>
    <property type="project" value="UniProtKB-UniRule"/>
</dbReference>
<dbReference type="GO" id="GO:0006412">
    <property type="term" value="P:translation"/>
    <property type="evidence" value="ECO:0007669"/>
    <property type="project" value="InterPro"/>
</dbReference>
<dbReference type="CDD" id="cd07026">
    <property type="entry name" value="Ribosomal_L20"/>
    <property type="match status" value="1"/>
</dbReference>
<dbReference type="FunFam" id="1.10.1900.20:FF:000001">
    <property type="entry name" value="50S ribosomal protein L20"/>
    <property type="match status" value="1"/>
</dbReference>
<dbReference type="Gene3D" id="6.10.160.10">
    <property type="match status" value="1"/>
</dbReference>
<dbReference type="Gene3D" id="1.10.1900.20">
    <property type="entry name" value="Ribosomal protein L20"/>
    <property type="match status" value="1"/>
</dbReference>
<dbReference type="HAMAP" id="MF_00382">
    <property type="entry name" value="Ribosomal_bL20"/>
    <property type="match status" value="1"/>
</dbReference>
<dbReference type="InterPro" id="IPR005813">
    <property type="entry name" value="Ribosomal_bL20"/>
</dbReference>
<dbReference type="InterPro" id="IPR049946">
    <property type="entry name" value="RIBOSOMAL_L20_CS"/>
</dbReference>
<dbReference type="InterPro" id="IPR035566">
    <property type="entry name" value="Ribosomal_protein_bL20_C"/>
</dbReference>
<dbReference type="NCBIfam" id="TIGR01032">
    <property type="entry name" value="rplT_bact"/>
    <property type="match status" value="1"/>
</dbReference>
<dbReference type="PANTHER" id="PTHR10986">
    <property type="entry name" value="39S RIBOSOMAL PROTEIN L20"/>
    <property type="match status" value="1"/>
</dbReference>
<dbReference type="Pfam" id="PF00453">
    <property type="entry name" value="Ribosomal_L20"/>
    <property type="match status" value="1"/>
</dbReference>
<dbReference type="PRINTS" id="PR00062">
    <property type="entry name" value="RIBOSOMALL20"/>
</dbReference>
<dbReference type="SUPFAM" id="SSF74731">
    <property type="entry name" value="Ribosomal protein L20"/>
    <property type="match status" value="1"/>
</dbReference>
<dbReference type="PROSITE" id="PS00937">
    <property type="entry name" value="RIBOSOMAL_L20"/>
    <property type="match status" value="1"/>
</dbReference>
<comment type="function">
    <text evidence="1">Binds directly to 23S ribosomal RNA and is necessary for the in vitro assembly process of the 50S ribosomal subunit. It is not involved in the protein synthesizing functions of that subunit.</text>
</comment>
<comment type="similarity">
    <text evidence="1">Belongs to the bacterial ribosomal protein bL20 family.</text>
</comment>
<accession>B0KKR5</accession>
<protein>
    <recommendedName>
        <fullName evidence="1">Large ribosomal subunit protein bL20</fullName>
    </recommendedName>
    <alternativeName>
        <fullName evidence="2">50S ribosomal protein L20</fullName>
    </alternativeName>
</protein>
<organism>
    <name type="scientific">Pseudomonas putida (strain GB-1)</name>
    <dbReference type="NCBI Taxonomy" id="76869"/>
    <lineage>
        <taxon>Bacteria</taxon>
        <taxon>Pseudomonadati</taxon>
        <taxon>Pseudomonadota</taxon>
        <taxon>Gammaproteobacteria</taxon>
        <taxon>Pseudomonadales</taxon>
        <taxon>Pseudomonadaceae</taxon>
        <taxon>Pseudomonas</taxon>
    </lineage>
</organism>
<reference key="1">
    <citation type="submission" date="2008-01" db="EMBL/GenBank/DDBJ databases">
        <title>Complete sequence of Pseudomonas putida GB-1.</title>
        <authorList>
            <consortium name="US DOE Joint Genome Institute"/>
            <person name="Copeland A."/>
            <person name="Lucas S."/>
            <person name="Lapidus A."/>
            <person name="Barry K."/>
            <person name="Glavina del Rio T."/>
            <person name="Dalin E."/>
            <person name="Tice H."/>
            <person name="Pitluck S."/>
            <person name="Bruce D."/>
            <person name="Goodwin L."/>
            <person name="Chertkov O."/>
            <person name="Brettin T."/>
            <person name="Detter J.C."/>
            <person name="Han C."/>
            <person name="Kuske C.R."/>
            <person name="Schmutz J."/>
            <person name="Larimer F."/>
            <person name="Land M."/>
            <person name="Hauser L."/>
            <person name="Kyrpides N."/>
            <person name="Kim E."/>
            <person name="McCarthy J.K."/>
            <person name="Richardson P."/>
        </authorList>
    </citation>
    <scope>NUCLEOTIDE SEQUENCE [LARGE SCALE GENOMIC DNA]</scope>
    <source>
        <strain>GB-1</strain>
    </source>
</reference>
<keyword id="KW-0687">Ribonucleoprotein</keyword>
<keyword id="KW-0689">Ribosomal protein</keyword>
<keyword id="KW-0694">RNA-binding</keyword>
<keyword id="KW-0699">rRNA-binding</keyword>
<sequence length="118" mass="13280">MARVKRGVIARKRHKKILKLAKGYYGARSRVFRVAKQAVIKAGQYAYRDRRQKKRQFRALWIARINAGARTNGLSYSRLIAGLKKASIEIDRKVLADLAVNEKAAFAAIVEKAKAVLA</sequence>
<evidence type="ECO:0000255" key="1">
    <source>
        <dbReference type="HAMAP-Rule" id="MF_00382"/>
    </source>
</evidence>
<evidence type="ECO:0000305" key="2"/>
<name>RL20_PSEPG</name>
<proteinExistence type="inferred from homology"/>